<dbReference type="EC" id="3.4.22.15"/>
<dbReference type="EMBL" id="X91754">
    <property type="protein sequence ID" value="CAA62869.1"/>
    <property type="molecule type" value="mRNA"/>
</dbReference>
<dbReference type="EMBL" id="CT868618">
    <property type="protein sequence ID" value="CAK87348.1"/>
    <property type="status" value="ALT_INIT"/>
    <property type="molecule type" value="Genomic_DNA"/>
</dbReference>
<dbReference type="PIR" id="S68783">
    <property type="entry name" value="S68783"/>
</dbReference>
<dbReference type="SMR" id="Q94714"/>
<dbReference type="STRING" id="5888.Q94714"/>
<dbReference type="MEROPS" id="C01.A54"/>
<dbReference type="KEGG" id="ptm:GSPATT00020990001"/>
<dbReference type="eggNOG" id="KOG1543">
    <property type="taxonomic scope" value="Eukaryota"/>
</dbReference>
<dbReference type="InParanoid" id="Q94714"/>
<dbReference type="OrthoDB" id="190265at2759"/>
<dbReference type="Proteomes" id="UP000000600">
    <property type="component" value="Partially assembled WGS sequence"/>
</dbReference>
<dbReference type="GO" id="GO:0005615">
    <property type="term" value="C:extracellular space"/>
    <property type="evidence" value="ECO:0000318"/>
    <property type="project" value="GO_Central"/>
</dbReference>
<dbReference type="GO" id="GO:0005764">
    <property type="term" value="C:lysosome"/>
    <property type="evidence" value="ECO:0000318"/>
    <property type="project" value="GO_Central"/>
</dbReference>
<dbReference type="GO" id="GO:0004197">
    <property type="term" value="F:cysteine-type endopeptidase activity"/>
    <property type="evidence" value="ECO:0000318"/>
    <property type="project" value="GO_Central"/>
</dbReference>
<dbReference type="GO" id="GO:0051603">
    <property type="term" value="P:proteolysis involved in protein catabolic process"/>
    <property type="evidence" value="ECO:0000318"/>
    <property type="project" value="GO_Central"/>
</dbReference>
<dbReference type="CDD" id="cd02248">
    <property type="entry name" value="Peptidase_C1A"/>
    <property type="match status" value="1"/>
</dbReference>
<dbReference type="FunFam" id="3.90.70.10:FF:000104">
    <property type="entry name" value="Cathepsin L 1"/>
    <property type="match status" value="1"/>
</dbReference>
<dbReference type="Gene3D" id="3.90.70.10">
    <property type="entry name" value="Cysteine proteinases"/>
    <property type="match status" value="1"/>
</dbReference>
<dbReference type="InterPro" id="IPR038765">
    <property type="entry name" value="Papain-like_cys_pep_sf"/>
</dbReference>
<dbReference type="InterPro" id="IPR000169">
    <property type="entry name" value="Pept_cys_AS"/>
</dbReference>
<dbReference type="InterPro" id="IPR013128">
    <property type="entry name" value="Peptidase_C1A"/>
</dbReference>
<dbReference type="InterPro" id="IPR000668">
    <property type="entry name" value="Peptidase_C1A_C"/>
</dbReference>
<dbReference type="InterPro" id="IPR039417">
    <property type="entry name" value="Peptidase_C1A_papain-like"/>
</dbReference>
<dbReference type="InterPro" id="IPR013201">
    <property type="entry name" value="Prot_inhib_I29"/>
</dbReference>
<dbReference type="PANTHER" id="PTHR12411">
    <property type="entry name" value="CYSTEINE PROTEASE FAMILY C1-RELATED"/>
    <property type="match status" value="1"/>
</dbReference>
<dbReference type="Pfam" id="PF08246">
    <property type="entry name" value="Inhibitor_I29"/>
    <property type="match status" value="1"/>
</dbReference>
<dbReference type="Pfam" id="PF00112">
    <property type="entry name" value="Peptidase_C1"/>
    <property type="match status" value="1"/>
</dbReference>
<dbReference type="PRINTS" id="PR00705">
    <property type="entry name" value="PAPAIN"/>
</dbReference>
<dbReference type="SMART" id="SM00848">
    <property type="entry name" value="Inhibitor_I29"/>
    <property type="match status" value="1"/>
</dbReference>
<dbReference type="SMART" id="SM00645">
    <property type="entry name" value="Pept_C1"/>
    <property type="match status" value="1"/>
</dbReference>
<dbReference type="SUPFAM" id="SSF54001">
    <property type="entry name" value="Cysteine proteinases"/>
    <property type="match status" value="1"/>
</dbReference>
<dbReference type="PROSITE" id="PS00139">
    <property type="entry name" value="THIOL_PROTEASE_CYS"/>
    <property type="match status" value="1"/>
</dbReference>
<organism>
    <name type="scientific">Paramecium tetraurelia</name>
    <dbReference type="NCBI Taxonomy" id="5888"/>
    <lineage>
        <taxon>Eukaryota</taxon>
        <taxon>Sar</taxon>
        <taxon>Alveolata</taxon>
        <taxon>Ciliophora</taxon>
        <taxon>Intramacronucleata</taxon>
        <taxon>Oligohymenophorea</taxon>
        <taxon>Peniculida</taxon>
        <taxon>Parameciidae</taxon>
        <taxon>Paramecium</taxon>
    </lineage>
</organism>
<evidence type="ECO:0000250" key="1"/>
<evidence type="ECO:0000255" key="2"/>
<evidence type="ECO:0000255" key="3">
    <source>
        <dbReference type="PROSITE-ProRule" id="PRU10088"/>
    </source>
</evidence>
<evidence type="ECO:0000269" key="4">
    <source>
    </source>
</evidence>
<evidence type="ECO:0000305" key="5"/>
<keyword id="KW-0903">Direct protein sequencing</keyword>
<keyword id="KW-1015">Disulfide bond</keyword>
<keyword id="KW-0378">Hydrolase</keyword>
<keyword id="KW-0645">Protease</keyword>
<keyword id="KW-1185">Reference proteome</keyword>
<keyword id="KW-0964">Secreted</keyword>
<keyword id="KW-0732">Signal</keyword>
<keyword id="KW-0788">Thiol protease</keyword>
<keyword id="KW-0865">Zymogen</keyword>
<accession>Q94714</accession>
<accession>A0DWD1</accession>
<name>CATL1_PARTE</name>
<sequence length="314" mass="35159">MMLLGASLYLNNTQEVSDEIDTANLYANWKMKYNRRYTNQRDEMYRYKVFTDNLNYIRAFYESPEEATFTLELNQFADMSQQEFAQTYLSLKVPRTAKLNAANSNFQYKGAEVDWTDNKKVKYPAVKNQGSCGSCWAFSAVGALEINTDIELNRKYELSEQDLVDCSGPYDNDGCNGGWMDSAFEYVADNGLAEAKDYPYTAKDGTCKTSVKRPYTHVQGFKDIDSCDELAQTIQERTVAVAVDANPWQFYRSGVLSKCTKNLNHGVVLVGVQADGAWKIRNSWGSSWGEAGHIRLAGGDTCGICAAPSFPILG</sequence>
<reference key="1">
    <citation type="journal article" date="1996" name="Eur. J. Biochem.">
        <title>Cathepsin L is an intracellular and extracellular protease in Paramecium tetraurelia: purification, cloning, sequencing and specific inhibition by its expressed propeptide.</title>
        <authorList>
            <person name="Voelkel H."/>
            <person name="Kurz U."/>
            <person name="Linder J."/>
            <person name="Klumpp S."/>
            <person name="Gnau V."/>
            <person name="Jung G."/>
            <person name="Schultz J.E."/>
        </authorList>
    </citation>
    <scope>NUCLEOTIDE SEQUENCE [MRNA]</scope>
    <scope>PROTEIN SEQUENCE OF 110-129 AND 181-204</scope>
    <source>
        <strain>Stock 51</strain>
    </source>
</reference>
<reference key="2">
    <citation type="journal article" date="2006" name="Nature">
        <title>Global trends of whole-genome duplications revealed by the ciliate Paramecium tetraurelia.</title>
        <authorList>
            <person name="Aury J.-M."/>
            <person name="Jaillon O."/>
            <person name="Duret L."/>
            <person name="Noel B."/>
            <person name="Jubin C."/>
            <person name="Porcel B.M."/>
            <person name="Segurens B."/>
            <person name="Daubin V."/>
            <person name="Anthouard V."/>
            <person name="Aiach N."/>
            <person name="Arnaiz O."/>
            <person name="Billaut A."/>
            <person name="Beisson J."/>
            <person name="Blanc I."/>
            <person name="Bouhouche K."/>
            <person name="Camara F."/>
            <person name="Duharcourt S."/>
            <person name="Guigo R."/>
            <person name="Gogendeau D."/>
            <person name="Katinka M."/>
            <person name="Keller A.-M."/>
            <person name="Kissmehl R."/>
            <person name="Klotz C."/>
            <person name="Koll F."/>
            <person name="Le Mouel A."/>
            <person name="Lepere G."/>
            <person name="Malinsky S."/>
            <person name="Nowacki M."/>
            <person name="Nowak J.K."/>
            <person name="Plattner H."/>
            <person name="Poulain J."/>
            <person name="Ruiz F."/>
            <person name="Serrano V."/>
            <person name="Zagulski M."/>
            <person name="Dessen P."/>
            <person name="Betermier M."/>
            <person name="Weissenbach J."/>
            <person name="Scarpelli C."/>
            <person name="Schaechter V."/>
            <person name="Sperling L."/>
            <person name="Meyer E."/>
            <person name="Cohen J."/>
            <person name="Wincker P."/>
        </authorList>
    </citation>
    <scope>NUCLEOTIDE SEQUENCE [LARGE SCALE GENOMIC DNA]</scope>
    <source>
        <strain>Stock d4-2</strain>
    </source>
</reference>
<protein>
    <recommendedName>
        <fullName>Cathepsin L 1</fullName>
        <ecNumber>3.4.22.15</ecNumber>
    </recommendedName>
</protein>
<comment type="function">
    <text>May be involved in extracellular digestion.</text>
</comment>
<comment type="catalytic activity">
    <reaction>
        <text>Specificity close to that of papain. As compared to cathepsin B, cathepsin L exhibits higher activity toward protein substrates, but has little activity on Z-Arg-Arg-NHMec, and no peptidyl-dipeptidase activity.</text>
        <dbReference type="EC" id="3.4.22.15"/>
    </reaction>
</comment>
<comment type="subcellular location">
    <subcellularLocation>
        <location>Secreted</location>
    </subcellularLocation>
</comment>
<comment type="similarity">
    <text evidence="3">Belongs to the peptidase C1 family.</text>
</comment>
<comment type="sequence caution" evidence="5">
    <conflict type="erroneous initiation">
        <sequence resource="EMBL-CDS" id="CAK87348"/>
    </conflict>
</comment>
<gene>
    <name type="ORF">GSPATT00020990001</name>
</gene>
<feature type="signal peptide" evidence="2">
    <location>
        <begin position="1"/>
        <end position="24"/>
    </location>
</feature>
<feature type="propeptide" id="PRO_0000026273" description="Activation peptide" evidence="4">
    <location>
        <begin position="25"/>
        <end position="109"/>
    </location>
</feature>
<feature type="chain" id="PRO_0000026274" description="Cathepsin L 1">
    <location>
        <begin position="110"/>
        <end position="314"/>
    </location>
</feature>
<feature type="active site" evidence="3">
    <location>
        <position position="135"/>
    </location>
</feature>
<feature type="active site" evidence="3">
    <location>
        <position position="265"/>
    </location>
</feature>
<feature type="active site" evidence="3">
    <location>
        <position position="282"/>
    </location>
</feature>
<feature type="disulfide bond" evidence="1">
    <location>
        <begin position="132"/>
        <end position="175"/>
    </location>
</feature>
<feature type="disulfide bond" evidence="1">
    <location>
        <begin position="166"/>
        <end position="207"/>
    </location>
</feature>
<feature type="disulfide bond" evidence="1">
    <location>
        <begin position="259"/>
        <end position="302"/>
    </location>
</feature>
<proteinExistence type="evidence at protein level"/>